<dbReference type="EC" id="2.4.1.227" evidence="1"/>
<dbReference type="EMBL" id="BA000022">
    <property type="protein sequence ID" value="BAA18775.1"/>
    <property type="status" value="ALT_INIT"/>
    <property type="molecule type" value="Genomic_DNA"/>
</dbReference>
<dbReference type="PIR" id="S76863">
    <property type="entry name" value="S76863"/>
</dbReference>
<dbReference type="SMR" id="P74657"/>
<dbReference type="FunCoup" id="P74657">
    <property type="interactions" value="330"/>
</dbReference>
<dbReference type="IntAct" id="P74657">
    <property type="interactions" value="3"/>
</dbReference>
<dbReference type="STRING" id="1148.gene:10500547"/>
<dbReference type="CAZy" id="GT28">
    <property type="family name" value="Glycosyltransferase Family 28"/>
</dbReference>
<dbReference type="PaxDb" id="1148-1653865"/>
<dbReference type="EnsemblBacteria" id="BAA18775">
    <property type="protein sequence ID" value="BAA18775"/>
    <property type="gene ID" value="BAA18775"/>
</dbReference>
<dbReference type="KEGG" id="syn:slr1656"/>
<dbReference type="eggNOG" id="COG0707">
    <property type="taxonomic scope" value="Bacteria"/>
</dbReference>
<dbReference type="InParanoid" id="P74657"/>
<dbReference type="PhylomeDB" id="P74657"/>
<dbReference type="UniPathway" id="UPA00219"/>
<dbReference type="Proteomes" id="UP000001425">
    <property type="component" value="Chromosome"/>
</dbReference>
<dbReference type="GO" id="GO:0005886">
    <property type="term" value="C:plasma membrane"/>
    <property type="evidence" value="ECO:0007669"/>
    <property type="project" value="UniProtKB-SubCell"/>
</dbReference>
<dbReference type="GO" id="GO:0016757">
    <property type="term" value="F:glycosyltransferase activity"/>
    <property type="evidence" value="ECO:0000318"/>
    <property type="project" value="GO_Central"/>
</dbReference>
<dbReference type="GO" id="GO:0051991">
    <property type="term" value="F:UDP-N-acetyl-D-glucosamine:N-acetylmuramoyl-L-alanyl-D-glutamyl-meso-2,6-diaminopimelyl-D-alanyl-D-alanine-diphosphoundecaprenol 4-beta-N-acetylglucosaminlytransferase activity"/>
    <property type="evidence" value="ECO:0007669"/>
    <property type="project" value="RHEA"/>
</dbReference>
<dbReference type="GO" id="GO:0050511">
    <property type="term" value="F:undecaprenyldiphospho-muramoylpentapeptide beta-N-acetylglucosaminyltransferase activity"/>
    <property type="evidence" value="ECO:0007669"/>
    <property type="project" value="UniProtKB-UniRule"/>
</dbReference>
<dbReference type="GO" id="GO:0005975">
    <property type="term" value="P:carbohydrate metabolic process"/>
    <property type="evidence" value="ECO:0007669"/>
    <property type="project" value="InterPro"/>
</dbReference>
<dbReference type="GO" id="GO:0051301">
    <property type="term" value="P:cell division"/>
    <property type="evidence" value="ECO:0007669"/>
    <property type="project" value="UniProtKB-KW"/>
</dbReference>
<dbReference type="GO" id="GO:0071555">
    <property type="term" value="P:cell wall organization"/>
    <property type="evidence" value="ECO:0007669"/>
    <property type="project" value="UniProtKB-KW"/>
</dbReference>
<dbReference type="GO" id="GO:0030259">
    <property type="term" value="P:lipid glycosylation"/>
    <property type="evidence" value="ECO:0007669"/>
    <property type="project" value="UniProtKB-UniRule"/>
</dbReference>
<dbReference type="GO" id="GO:0009252">
    <property type="term" value="P:peptidoglycan biosynthetic process"/>
    <property type="evidence" value="ECO:0007669"/>
    <property type="project" value="UniProtKB-UniRule"/>
</dbReference>
<dbReference type="GO" id="GO:0008360">
    <property type="term" value="P:regulation of cell shape"/>
    <property type="evidence" value="ECO:0007669"/>
    <property type="project" value="UniProtKB-KW"/>
</dbReference>
<dbReference type="CDD" id="cd03785">
    <property type="entry name" value="GT28_MurG"/>
    <property type="match status" value="1"/>
</dbReference>
<dbReference type="Gene3D" id="3.40.50.2000">
    <property type="entry name" value="Glycogen Phosphorylase B"/>
    <property type="match status" value="2"/>
</dbReference>
<dbReference type="HAMAP" id="MF_00033">
    <property type="entry name" value="MurG"/>
    <property type="match status" value="1"/>
</dbReference>
<dbReference type="InterPro" id="IPR006009">
    <property type="entry name" value="GlcNAc_MurG"/>
</dbReference>
<dbReference type="InterPro" id="IPR007235">
    <property type="entry name" value="Glyco_trans_28_C"/>
</dbReference>
<dbReference type="InterPro" id="IPR004276">
    <property type="entry name" value="GlycoTrans_28_N"/>
</dbReference>
<dbReference type="NCBIfam" id="TIGR01133">
    <property type="entry name" value="murG"/>
    <property type="match status" value="1"/>
</dbReference>
<dbReference type="PANTHER" id="PTHR21015:SF22">
    <property type="entry name" value="GLYCOSYLTRANSFERASE"/>
    <property type="match status" value="1"/>
</dbReference>
<dbReference type="PANTHER" id="PTHR21015">
    <property type="entry name" value="UDP-N-ACETYLGLUCOSAMINE--N-ACETYLMURAMYL-(PENTAPEPTIDE) PYROPHOSPHORYL-UNDECAPRENOL N-ACETYLGLUCOSAMINE TRANSFERASE 1"/>
    <property type="match status" value="1"/>
</dbReference>
<dbReference type="Pfam" id="PF04101">
    <property type="entry name" value="Glyco_tran_28_C"/>
    <property type="match status" value="1"/>
</dbReference>
<dbReference type="Pfam" id="PF03033">
    <property type="entry name" value="Glyco_transf_28"/>
    <property type="match status" value="1"/>
</dbReference>
<dbReference type="SUPFAM" id="SSF53756">
    <property type="entry name" value="UDP-Glycosyltransferase/glycogen phosphorylase"/>
    <property type="match status" value="1"/>
</dbReference>
<evidence type="ECO:0000255" key="1">
    <source>
        <dbReference type="HAMAP-Rule" id="MF_00033"/>
    </source>
</evidence>
<evidence type="ECO:0000305" key="2"/>
<feature type="chain" id="PRO_0000109230" description="UDP-N-acetylglucosamine--N-acetylmuramyl-(pentapeptide) pyrophosphoryl-undecaprenol N-acetylglucosamine transferase">
    <location>
        <begin position="1"/>
        <end position="355"/>
    </location>
</feature>
<feature type="binding site" evidence="1">
    <location>
        <begin position="14"/>
        <end position="16"/>
    </location>
    <ligand>
        <name>UDP-N-acetyl-alpha-D-glucosamine</name>
        <dbReference type="ChEBI" id="CHEBI:57705"/>
    </ligand>
</feature>
<feature type="binding site" evidence="1">
    <location>
        <position position="123"/>
    </location>
    <ligand>
        <name>UDP-N-acetyl-alpha-D-glucosamine</name>
        <dbReference type="ChEBI" id="CHEBI:57705"/>
    </ligand>
</feature>
<feature type="binding site" evidence="1">
    <location>
        <position position="164"/>
    </location>
    <ligand>
        <name>UDP-N-acetyl-alpha-D-glucosamine</name>
        <dbReference type="ChEBI" id="CHEBI:57705"/>
    </ligand>
</feature>
<feature type="binding site" evidence="1">
    <location>
        <position position="190"/>
    </location>
    <ligand>
        <name>UDP-N-acetyl-alpha-D-glucosamine</name>
        <dbReference type="ChEBI" id="CHEBI:57705"/>
    </ligand>
</feature>
<feature type="binding site" evidence="1">
    <location>
        <position position="284"/>
    </location>
    <ligand>
        <name>UDP-N-acetyl-alpha-D-glucosamine</name>
        <dbReference type="ChEBI" id="CHEBI:57705"/>
    </ligand>
</feature>
<keyword id="KW-0131">Cell cycle</keyword>
<keyword id="KW-0132">Cell division</keyword>
<keyword id="KW-0997">Cell inner membrane</keyword>
<keyword id="KW-1003">Cell membrane</keyword>
<keyword id="KW-0133">Cell shape</keyword>
<keyword id="KW-0961">Cell wall biogenesis/degradation</keyword>
<keyword id="KW-0328">Glycosyltransferase</keyword>
<keyword id="KW-0472">Membrane</keyword>
<keyword id="KW-0573">Peptidoglycan synthesis</keyword>
<keyword id="KW-1185">Reference proteome</keyword>
<keyword id="KW-0808">Transferase</keyword>
<accession>P74657</accession>
<proteinExistence type="inferred from homology"/>
<protein>
    <recommendedName>
        <fullName evidence="1">UDP-N-acetylglucosamine--N-acetylmuramyl-(pentapeptide) pyrophosphoryl-undecaprenol N-acetylglucosamine transferase</fullName>
        <ecNumber evidence="1">2.4.1.227</ecNumber>
    </recommendedName>
    <alternativeName>
        <fullName evidence="1">Undecaprenyl-PP-MurNAc-pentapeptide-UDPGlcNAc GlcNAc transferase</fullName>
    </alternativeName>
</protein>
<gene>
    <name evidence="1" type="primary">murG</name>
    <name type="ordered locus">slr1656</name>
</gene>
<reference key="1">
    <citation type="journal article" date="1996" name="DNA Res.">
        <title>Sequence analysis of the genome of the unicellular cyanobacterium Synechocystis sp. strain PCC6803. II. Sequence determination of the entire genome and assignment of potential protein-coding regions.</title>
        <authorList>
            <person name="Kaneko T."/>
            <person name="Sato S."/>
            <person name="Kotani H."/>
            <person name="Tanaka A."/>
            <person name="Asamizu E."/>
            <person name="Nakamura Y."/>
            <person name="Miyajima N."/>
            <person name="Hirosawa M."/>
            <person name="Sugiura M."/>
            <person name="Sasamoto S."/>
            <person name="Kimura T."/>
            <person name="Hosouchi T."/>
            <person name="Matsuno A."/>
            <person name="Muraki A."/>
            <person name="Nakazaki N."/>
            <person name="Naruo K."/>
            <person name="Okumura S."/>
            <person name="Shimpo S."/>
            <person name="Takeuchi C."/>
            <person name="Wada T."/>
            <person name="Watanabe A."/>
            <person name="Yamada M."/>
            <person name="Yasuda M."/>
            <person name="Tabata S."/>
        </authorList>
    </citation>
    <scope>NUCLEOTIDE SEQUENCE [LARGE SCALE GENOMIC DNA]</scope>
    <source>
        <strain>ATCC 27184 / PCC 6803 / Kazusa</strain>
    </source>
</reference>
<organism>
    <name type="scientific">Synechocystis sp. (strain ATCC 27184 / PCC 6803 / Kazusa)</name>
    <dbReference type="NCBI Taxonomy" id="1111708"/>
    <lineage>
        <taxon>Bacteria</taxon>
        <taxon>Bacillati</taxon>
        <taxon>Cyanobacteriota</taxon>
        <taxon>Cyanophyceae</taxon>
        <taxon>Synechococcales</taxon>
        <taxon>Merismopediaceae</taxon>
        <taxon>Synechocystis</taxon>
    </lineage>
</organism>
<comment type="function">
    <text evidence="1">Cell wall formation. Catalyzes the transfer of a GlcNAc subunit on undecaprenyl-pyrophosphoryl-MurNAc-pentapeptide (lipid intermediate I) to form undecaprenyl-pyrophosphoryl-MurNAc-(pentapeptide)GlcNAc (lipid intermediate II).</text>
</comment>
<comment type="catalytic activity">
    <reaction evidence="1">
        <text>di-trans,octa-cis-undecaprenyl diphospho-N-acetyl-alpha-D-muramoyl-L-alanyl-D-glutamyl-meso-2,6-diaminopimeloyl-D-alanyl-D-alanine + UDP-N-acetyl-alpha-D-glucosamine = di-trans,octa-cis-undecaprenyl diphospho-[N-acetyl-alpha-D-glucosaminyl-(1-&gt;4)]-N-acetyl-alpha-D-muramoyl-L-alanyl-D-glutamyl-meso-2,6-diaminopimeloyl-D-alanyl-D-alanine + UDP + H(+)</text>
        <dbReference type="Rhea" id="RHEA:31227"/>
        <dbReference type="ChEBI" id="CHEBI:15378"/>
        <dbReference type="ChEBI" id="CHEBI:57705"/>
        <dbReference type="ChEBI" id="CHEBI:58223"/>
        <dbReference type="ChEBI" id="CHEBI:61387"/>
        <dbReference type="ChEBI" id="CHEBI:61388"/>
        <dbReference type="EC" id="2.4.1.227"/>
    </reaction>
</comment>
<comment type="pathway">
    <text evidence="1">Cell wall biogenesis; peptidoglycan biosynthesis.</text>
</comment>
<comment type="subcellular location">
    <subcellularLocation>
        <location evidence="1">Cell inner membrane</location>
        <topology evidence="1">Peripheral membrane protein</topology>
        <orientation evidence="1">Cytoplasmic side</orientation>
    </subcellularLocation>
</comment>
<comment type="similarity">
    <text evidence="1">Belongs to the glycosyltransferase 28 family. MurG subfamily.</text>
</comment>
<comment type="sequence caution" evidence="2">
    <conflict type="erroneous initiation">
        <sequence resource="EMBL-CDS" id="BAA18775"/>
    </conflict>
</comment>
<name>MURG_SYNY3</name>
<sequence length="355" mass="38293">MTEPIRLLIAASGTGGHLFPALALAQQLPDYEIIWLGVPDRLETTLVPRQYPLQTIPVEGFQGRPSLKTIKIGWNLLRSVFTVRKLIKSKKINAVATTGGYIAAPAIVAAKLCNIPVIFHESNFIPGKVTTWLGRWCDTVAIGFRGTAKYLPNCATVWISTPVREQFRQPQSLDLPIPPNRSLIVVAGGSQGAVTVNQQVRSCVPAWVNAGAFIVHLTGKNDPEAATFSHDHYLSLEFFDNMAALLQKADLAISRAGAGTLTELAVTQTPSILIPYPFAAENHQMYNAQVFVDAGAALMFAQKSLTAEQLEQAGLDLLQSPENLATMAKAAGTLADLDSAEQLAAIVRASVEKSR</sequence>